<sequence>MFLIITRDTMFFTAMKNILSKGNVVHIQNEEEIDVMLHQNAFVIIDTLMNNVFHSNFLTQIERLKPVHVIVFSPFNIKRCLGKVPVTFVPRTITIIDFVALINGSYCSVPEANVSLSRKQHQVLSCIANQMTTEDILEKLKISLKTFYCHKHNIMMILNLKRINELVRHQHIDYLV</sequence>
<reference key="1">
    <citation type="journal article" date="2002" name="Nucleic Acids Res.">
        <title>Genome sequence of Shigella flexneri 2a: insights into pathogenicity through comparison with genomes of Escherichia coli K12 and O157.</title>
        <authorList>
            <person name="Jin Q."/>
            <person name="Yuan Z."/>
            <person name="Xu J."/>
            <person name="Wang Y."/>
            <person name="Shen Y."/>
            <person name="Lu W."/>
            <person name="Wang J."/>
            <person name="Liu H."/>
            <person name="Yang J."/>
            <person name="Yang F."/>
            <person name="Zhang X."/>
            <person name="Zhang J."/>
            <person name="Yang G."/>
            <person name="Wu H."/>
            <person name="Qu D."/>
            <person name="Dong J."/>
            <person name="Sun L."/>
            <person name="Xue Y."/>
            <person name="Zhao A."/>
            <person name="Gao Y."/>
            <person name="Zhu J."/>
            <person name="Kan B."/>
            <person name="Ding K."/>
            <person name="Chen S."/>
            <person name="Cheng H."/>
            <person name="Yao Z."/>
            <person name="He B."/>
            <person name="Chen R."/>
            <person name="Ma D."/>
            <person name="Qiang B."/>
            <person name="Wen Y."/>
            <person name="Hou Y."/>
            <person name="Yu J."/>
        </authorList>
    </citation>
    <scope>NUCLEOTIDE SEQUENCE [LARGE SCALE GENOMIC DNA]</scope>
    <source>
        <strain>301 / Serotype 2a</strain>
    </source>
</reference>
<reference key="2">
    <citation type="journal article" date="2003" name="Infect. Immun.">
        <title>Complete genome sequence and comparative genomics of Shigella flexneri serotype 2a strain 2457T.</title>
        <authorList>
            <person name="Wei J."/>
            <person name="Goldberg M.B."/>
            <person name="Burland V."/>
            <person name="Venkatesan M.M."/>
            <person name="Deng W."/>
            <person name="Fournier G."/>
            <person name="Mayhew G.F."/>
            <person name="Plunkett G. III"/>
            <person name="Rose D.J."/>
            <person name="Darling A."/>
            <person name="Mau B."/>
            <person name="Perna N.T."/>
            <person name="Payne S.M."/>
            <person name="Runyen-Janecky L.J."/>
            <person name="Zhou S."/>
            <person name="Schwartz D.C."/>
            <person name="Blattner F.R."/>
        </authorList>
    </citation>
    <scope>NUCLEOTIDE SEQUENCE [LARGE SCALE GENOMIC DNA]</scope>
    <source>
        <strain>ATCC 700930 / 2457T / Serotype 2a</strain>
    </source>
</reference>
<protein>
    <recommendedName>
        <fullName>HTH-type transcriptional regulator DctR</fullName>
    </recommendedName>
</protein>
<gene>
    <name type="primary">dctR</name>
    <name type="ordered locus">SF3541</name>
    <name type="ordered locus">S4226</name>
</gene>
<organism>
    <name type="scientific">Shigella flexneri</name>
    <dbReference type="NCBI Taxonomy" id="623"/>
    <lineage>
        <taxon>Bacteria</taxon>
        <taxon>Pseudomonadati</taxon>
        <taxon>Pseudomonadota</taxon>
        <taxon>Gammaproteobacteria</taxon>
        <taxon>Enterobacterales</taxon>
        <taxon>Enterobacteriaceae</taxon>
        <taxon>Shigella</taxon>
    </lineage>
</organism>
<proteinExistence type="inferred from homology"/>
<feature type="chain" id="PRO_0000184148" description="HTH-type transcriptional regulator DctR">
    <location>
        <begin position="1"/>
        <end position="176"/>
    </location>
</feature>
<feature type="domain" description="HTH luxR-type" evidence="2">
    <location>
        <begin position="109"/>
        <end position="174"/>
    </location>
</feature>
<feature type="DNA-binding region" description="H-T-H motif" evidence="2">
    <location>
        <begin position="133"/>
        <end position="152"/>
    </location>
</feature>
<accession>Q83J60</accession>
<accession>Q7UAW3</accession>
<comment type="function">
    <text evidence="1">May act as a transcriptional regulator of dctA.</text>
</comment>
<comment type="induction">
    <text evidence="1">By acidic conditions. Could be induced by EvgA via the induction of YdeO (By similarity).</text>
</comment>
<dbReference type="EMBL" id="AE005674">
    <property type="protein sequence ID" value="AAN44997.2"/>
    <property type="molecule type" value="Genomic_DNA"/>
</dbReference>
<dbReference type="EMBL" id="AE014073">
    <property type="protein sequence ID" value="AAP19189.1"/>
    <property type="molecule type" value="Genomic_DNA"/>
</dbReference>
<dbReference type="RefSeq" id="WP_000478623.1">
    <property type="nucleotide sequence ID" value="NZ_WPGW01000225.1"/>
</dbReference>
<dbReference type="SMR" id="Q83J60"/>
<dbReference type="STRING" id="198214.SF3541"/>
<dbReference type="PaxDb" id="198214-SF3541"/>
<dbReference type="KEGG" id="sfl:SF3541"/>
<dbReference type="KEGG" id="sfx:S4226"/>
<dbReference type="PATRIC" id="fig|198214.7.peg.4170"/>
<dbReference type="HOGENOM" id="CLU_1522929_0_0_6"/>
<dbReference type="Proteomes" id="UP000001006">
    <property type="component" value="Chromosome"/>
</dbReference>
<dbReference type="Proteomes" id="UP000002673">
    <property type="component" value="Chromosome"/>
</dbReference>
<dbReference type="GO" id="GO:0003677">
    <property type="term" value="F:DNA binding"/>
    <property type="evidence" value="ECO:0007669"/>
    <property type="project" value="UniProtKB-KW"/>
</dbReference>
<dbReference type="GO" id="GO:0006355">
    <property type="term" value="P:regulation of DNA-templated transcription"/>
    <property type="evidence" value="ECO:0007669"/>
    <property type="project" value="InterPro"/>
</dbReference>
<dbReference type="CDD" id="cd06170">
    <property type="entry name" value="LuxR_C_like"/>
    <property type="match status" value="1"/>
</dbReference>
<dbReference type="FunFam" id="1.10.10.10:FF:000267">
    <property type="entry name" value="HTH-type transcriptional regulator DctR"/>
    <property type="match status" value="1"/>
</dbReference>
<dbReference type="Gene3D" id="1.10.10.10">
    <property type="entry name" value="Winged helix-like DNA-binding domain superfamily/Winged helix DNA-binding domain"/>
    <property type="match status" value="1"/>
</dbReference>
<dbReference type="InterPro" id="IPR016032">
    <property type="entry name" value="Sig_transdc_resp-reg_C-effctor"/>
</dbReference>
<dbReference type="InterPro" id="IPR000792">
    <property type="entry name" value="Tscrpt_reg_LuxR_C"/>
</dbReference>
<dbReference type="InterPro" id="IPR036388">
    <property type="entry name" value="WH-like_DNA-bd_sf"/>
</dbReference>
<dbReference type="Pfam" id="PF00196">
    <property type="entry name" value="GerE"/>
    <property type="match status" value="1"/>
</dbReference>
<dbReference type="SMART" id="SM00421">
    <property type="entry name" value="HTH_LUXR"/>
    <property type="match status" value="1"/>
</dbReference>
<dbReference type="SUPFAM" id="SSF46894">
    <property type="entry name" value="C-terminal effector domain of the bipartite response regulators"/>
    <property type="match status" value="1"/>
</dbReference>
<dbReference type="PROSITE" id="PS50043">
    <property type="entry name" value="HTH_LUXR_2"/>
    <property type="match status" value="1"/>
</dbReference>
<name>DCTR_SHIFL</name>
<keyword id="KW-0238">DNA-binding</keyword>
<keyword id="KW-1185">Reference proteome</keyword>
<keyword id="KW-0804">Transcription</keyword>
<keyword id="KW-0805">Transcription regulation</keyword>
<evidence type="ECO:0000250" key="1"/>
<evidence type="ECO:0000255" key="2">
    <source>
        <dbReference type="PROSITE-ProRule" id="PRU00411"/>
    </source>
</evidence>